<gene>
    <name evidence="1" type="primary">mnmE</name>
    <name evidence="1" type="synonym">trmE</name>
    <name type="ordered locus">SA2501</name>
</gene>
<name>MNME_STAAN</name>
<organism>
    <name type="scientific">Staphylococcus aureus (strain N315)</name>
    <dbReference type="NCBI Taxonomy" id="158879"/>
    <lineage>
        <taxon>Bacteria</taxon>
        <taxon>Bacillati</taxon>
        <taxon>Bacillota</taxon>
        <taxon>Bacilli</taxon>
        <taxon>Bacillales</taxon>
        <taxon>Staphylococcaceae</taxon>
        <taxon>Staphylococcus</taxon>
    </lineage>
</organism>
<evidence type="ECO:0000255" key="1">
    <source>
        <dbReference type="HAMAP-Rule" id="MF_00379"/>
    </source>
</evidence>
<comment type="function">
    <text evidence="1">Exhibits a very high intrinsic GTPase hydrolysis rate. Involved in the addition of a carboxymethylaminomethyl (cmnm) group at the wobble position (U34) of certain tRNAs, forming tRNA-cmnm(5)s(2)U34.</text>
</comment>
<comment type="cofactor">
    <cofactor evidence="1">
        <name>K(+)</name>
        <dbReference type="ChEBI" id="CHEBI:29103"/>
    </cofactor>
    <text evidence="1">Binds 1 potassium ion per subunit.</text>
</comment>
<comment type="subunit">
    <text evidence="1">Homodimer. Heterotetramer of two MnmE and two MnmG subunits.</text>
</comment>
<comment type="subcellular location">
    <subcellularLocation>
        <location evidence="1">Cytoplasm</location>
    </subcellularLocation>
</comment>
<comment type="similarity">
    <text evidence="1">Belongs to the TRAFAC class TrmE-Era-EngA-EngB-Septin-like GTPase superfamily. TrmE GTPase family.</text>
</comment>
<keyword id="KW-0963">Cytoplasm</keyword>
<keyword id="KW-0342">GTP-binding</keyword>
<keyword id="KW-0378">Hydrolase</keyword>
<keyword id="KW-0460">Magnesium</keyword>
<keyword id="KW-0479">Metal-binding</keyword>
<keyword id="KW-0547">Nucleotide-binding</keyword>
<keyword id="KW-0630">Potassium</keyword>
<keyword id="KW-0819">tRNA processing</keyword>
<proteinExistence type="inferred from homology"/>
<dbReference type="EC" id="3.6.-.-" evidence="1"/>
<dbReference type="EMBL" id="BA000018">
    <property type="protein sequence ID" value="BAB43809.1"/>
    <property type="molecule type" value="Genomic_DNA"/>
</dbReference>
<dbReference type="PIR" id="G90080">
    <property type="entry name" value="G90080"/>
</dbReference>
<dbReference type="RefSeq" id="WP_000362509.1">
    <property type="nucleotide sequence ID" value="NC_002745.2"/>
</dbReference>
<dbReference type="SMR" id="P66972"/>
<dbReference type="EnsemblBacteria" id="BAB43809">
    <property type="protein sequence ID" value="BAB43809"/>
    <property type="gene ID" value="BAB43809"/>
</dbReference>
<dbReference type="KEGG" id="sau:SA2501"/>
<dbReference type="HOGENOM" id="CLU_019624_4_1_9"/>
<dbReference type="GO" id="GO:0005829">
    <property type="term" value="C:cytosol"/>
    <property type="evidence" value="ECO:0007669"/>
    <property type="project" value="TreeGrafter"/>
</dbReference>
<dbReference type="GO" id="GO:0005525">
    <property type="term" value="F:GTP binding"/>
    <property type="evidence" value="ECO:0007669"/>
    <property type="project" value="UniProtKB-UniRule"/>
</dbReference>
<dbReference type="GO" id="GO:0003924">
    <property type="term" value="F:GTPase activity"/>
    <property type="evidence" value="ECO:0007669"/>
    <property type="project" value="UniProtKB-UniRule"/>
</dbReference>
<dbReference type="GO" id="GO:0046872">
    <property type="term" value="F:metal ion binding"/>
    <property type="evidence" value="ECO:0007669"/>
    <property type="project" value="UniProtKB-KW"/>
</dbReference>
<dbReference type="GO" id="GO:0030488">
    <property type="term" value="P:tRNA methylation"/>
    <property type="evidence" value="ECO:0007669"/>
    <property type="project" value="TreeGrafter"/>
</dbReference>
<dbReference type="GO" id="GO:0002098">
    <property type="term" value="P:tRNA wobble uridine modification"/>
    <property type="evidence" value="ECO:0007669"/>
    <property type="project" value="TreeGrafter"/>
</dbReference>
<dbReference type="CDD" id="cd04164">
    <property type="entry name" value="trmE"/>
    <property type="match status" value="1"/>
</dbReference>
<dbReference type="CDD" id="cd14858">
    <property type="entry name" value="TrmE_N"/>
    <property type="match status" value="1"/>
</dbReference>
<dbReference type="FunFam" id="3.30.1360.120:FF:000003">
    <property type="entry name" value="tRNA modification GTPase MnmE"/>
    <property type="match status" value="1"/>
</dbReference>
<dbReference type="FunFam" id="3.40.50.300:FF:000494">
    <property type="entry name" value="tRNA modification GTPase MnmE"/>
    <property type="match status" value="1"/>
</dbReference>
<dbReference type="Gene3D" id="3.40.50.300">
    <property type="entry name" value="P-loop containing nucleotide triphosphate hydrolases"/>
    <property type="match status" value="1"/>
</dbReference>
<dbReference type="Gene3D" id="3.30.1360.120">
    <property type="entry name" value="Probable tRNA modification gtpase trme, domain 1"/>
    <property type="match status" value="1"/>
</dbReference>
<dbReference type="Gene3D" id="1.20.120.430">
    <property type="entry name" value="tRNA modification GTPase MnmE domain 2"/>
    <property type="match status" value="1"/>
</dbReference>
<dbReference type="HAMAP" id="MF_00379">
    <property type="entry name" value="GTPase_MnmE"/>
    <property type="match status" value="1"/>
</dbReference>
<dbReference type="InterPro" id="IPR031168">
    <property type="entry name" value="G_TrmE"/>
</dbReference>
<dbReference type="InterPro" id="IPR006073">
    <property type="entry name" value="GTP-bd"/>
</dbReference>
<dbReference type="InterPro" id="IPR018948">
    <property type="entry name" value="GTP-bd_TrmE_N"/>
</dbReference>
<dbReference type="InterPro" id="IPR004520">
    <property type="entry name" value="GTPase_MnmE"/>
</dbReference>
<dbReference type="InterPro" id="IPR027368">
    <property type="entry name" value="MnmE_dom2"/>
</dbReference>
<dbReference type="InterPro" id="IPR025867">
    <property type="entry name" value="MnmE_helical"/>
</dbReference>
<dbReference type="InterPro" id="IPR027417">
    <property type="entry name" value="P-loop_NTPase"/>
</dbReference>
<dbReference type="InterPro" id="IPR005225">
    <property type="entry name" value="Small_GTP-bd"/>
</dbReference>
<dbReference type="InterPro" id="IPR027266">
    <property type="entry name" value="TrmE/GcvT_dom1"/>
</dbReference>
<dbReference type="NCBIfam" id="TIGR00450">
    <property type="entry name" value="mnmE_trmE_thdF"/>
    <property type="match status" value="1"/>
</dbReference>
<dbReference type="NCBIfam" id="NF003661">
    <property type="entry name" value="PRK05291.1-3"/>
    <property type="match status" value="1"/>
</dbReference>
<dbReference type="NCBIfam" id="TIGR00231">
    <property type="entry name" value="small_GTP"/>
    <property type="match status" value="1"/>
</dbReference>
<dbReference type="PANTHER" id="PTHR42714">
    <property type="entry name" value="TRNA MODIFICATION GTPASE GTPBP3"/>
    <property type="match status" value="1"/>
</dbReference>
<dbReference type="PANTHER" id="PTHR42714:SF2">
    <property type="entry name" value="TRNA MODIFICATION GTPASE GTPBP3, MITOCHONDRIAL"/>
    <property type="match status" value="1"/>
</dbReference>
<dbReference type="Pfam" id="PF01926">
    <property type="entry name" value="MMR_HSR1"/>
    <property type="match status" value="1"/>
</dbReference>
<dbReference type="Pfam" id="PF12631">
    <property type="entry name" value="MnmE_helical"/>
    <property type="match status" value="1"/>
</dbReference>
<dbReference type="Pfam" id="PF10396">
    <property type="entry name" value="TrmE_N"/>
    <property type="match status" value="1"/>
</dbReference>
<dbReference type="PRINTS" id="PR00449">
    <property type="entry name" value="RASTRNSFRMNG"/>
</dbReference>
<dbReference type="SUPFAM" id="SSF52540">
    <property type="entry name" value="P-loop containing nucleoside triphosphate hydrolases"/>
    <property type="match status" value="1"/>
</dbReference>
<dbReference type="SUPFAM" id="SSF116878">
    <property type="entry name" value="TrmE connector domain"/>
    <property type="match status" value="1"/>
</dbReference>
<dbReference type="PROSITE" id="PS51709">
    <property type="entry name" value="G_TRME"/>
    <property type="match status" value="1"/>
</dbReference>
<reference key="1">
    <citation type="journal article" date="2001" name="Lancet">
        <title>Whole genome sequencing of meticillin-resistant Staphylococcus aureus.</title>
        <authorList>
            <person name="Kuroda M."/>
            <person name="Ohta T."/>
            <person name="Uchiyama I."/>
            <person name="Baba T."/>
            <person name="Yuzawa H."/>
            <person name="Kobayashi I."/>
            <person name="Cui L."/>
            <person name="Oguchi A."/>
            <person name="Aoki K."/>
            <person name="Nagai Y."/>
            <person name="Lian J.-Q."/>
            <person name="Ito T."/>
            <person name="Kanamori M."/>
            <person name="Matsumaru H."/>
            <person name="Maruyama A."/>
            <person name="Murakami H."/>
            <person name="Hosoyama A."/>
            <person name="Mizutani-Ui Y."/>
            <person name="Takahashi N.K."/>
            <person name="Sawano T."/>
            <person name="Inoue R."/>
            <person name="Kaito C."/>
            <person name="Sekimizu K."/>
            <person name="Hirakawa H."/>
            <person name="Kuhara S."/>
            <person name="Goto S."/>
            <person name="Yabuzaki J."/>
            <person name="Kanehisa M."/>
            <person name="Yamashita A."/>
            <person name="Oshima K."/>
            <person name="Furuya K."/>
            <person name="Yoshino C."/>
            <person name="Shiba T."/>
            <person name="Hattori M."/>
            <person name="Ogasawara N."/>
            <person name="Hayashi H."/>
            <person name="Hiramatsu K."/>
        </authorList>
    </citation>
    <scope>NUCLEOTIDE SEQUENCE [LARGE SCALE GENOMIC DNA]</scope>
    <source>
        <strain>N315</strain>
    </source>
</reference>
<feature type="chain" id="PRO_0000188917" description="tRNA modification GTPase MnmE">
    <location>
        <begin position="1"/>
        <end position="459"/>
    </location>
</feature>
<feature type="domain" description="TrmE-type G">
    <location>
        <begin position="221"/>
        <end position="380"/>
    </location>
</feature>
<feature type="binding site" evidence="1">
    <location>
        <position position="22"/>
    </location>
    <ligand>
        <name>(6S)-5-formyl-5,6,7,8-tetrahydrofolate</name>
        <dbReference type="ChEBI" id="CHEBI:57457"/>
    </ligand>
</feature>
<feature type="binding site" evidence="1">
    <location>
        <position position="85"/>
    </location>
    <ligand>
        <name>(6S)-5-formyl-5,6,7,8-tetrahydrofolate</name>
        <dbReference type="ChEBI" id="CHEBI:57457"/>
    </ligand>
</feature>
<feature type="binding site" evidence="1">
    <location>
        <position position="124"/>
    </location>
    <ligand>
        <name>(6S)-5-formyl-5,6,7,8-tetrahydrofolate</name>
        <dbReference type="ChEBI" id="CHEBI:57457"/>
    </ligand>
</feature>
<feature type="binding site" evidence="1">
    <location>
        <begin position="231"/>
        <end position="236"/>
    </location>
    <ligand>
        <name>GTP</name>
        <dbReference type="ChEBI" id="CHEBI:37565"/>
    </ligand>
</feature>
<feature type="binding site" evidence="1">
    <location>
        <position position="231"/>
    </location>
    <ligand>
        <name>K(+)</name>
        <dbReference type="ChEBI" id="CHEBI:29103"/>
    </ligand>
</feature>
<feature type="binding site" evidence="1">
    <location>
        <position position="235"/>
    </location>
    <ligand>
        <name>Mg(2+)</name>
        <dbReference type="ChEBI" id="CHEBI:18420"/>
    </ligand>
</feature>
<feature type="binding site" evidence="1">
    <location>
        <begin position="250"/>
        <end position="256"/>
    </location>
    <ligand>
        <name>GTP</name>
        <dbReference type="ChEBI" id="CHEBI:37565"/>
    </ligand>
</feature>
<feature type="binding site" evidence="1">
    <location>
        <position position="250"/>
    </location>
    <ligand>
        <name>K(+)</name>
        <dbReference type="ChEBI" id="CHEBI:29103"/>
    </ligand>
</feature>
<feature type="binding site" evidence="1">
    <location>
        <position position="252"/>
    </location>
    <ligand>
        <name>K(+)</name>
        <dbReference type="ChEBI" id="CHEBI:29103"/>
    </ligand>
</feature>
<feature type="binding site" evidence="1">
    <location>
        <position position="255"/>
    </location>
    <ligand>
        <name>K(+)</name>
        <dbReference type="ChEBI" id="CHEBI:29103"/>
    </ligand>
</feature>
<feature type="binding site" evidence="1">
    <location>
        <position position="256"/>
    </location>
    <ligand>
        <name>Mg(2+)</name>
        <dbReference type="ChEBI" id="CHEBI:18420"/>
    </ligand>
</feature>
<feature type="binding site" evidence="1">
    <location>
        <begin position="275"/>
        <end position="278"/>
    </location>
    <ligand>
        <name>GTP</name>
        <dbReference type="ChEBI" id="CHEBI:37565"/>
    </ligand>
</feature>
<feature type="binding site" evidence="1">
    <location>
        <position position="459"/>
    </location>
    <ligand>
        <name>(6S)-5-formyl-5,6,7,8-tetrahydrofolate</name>
        <dbReference type="ChEBI" id="CHEBI:57457"/>
    </ligand>
</feature>
<accession>P66972</accession>
<accession>Q99QT3</accession>
<sequence length="459" mass="51341">MDLDTITSISTPMGEGAIGIVRLSGPQAVEIADKLYKGKHLLNDVPSHTINYGHIIDPESKEVVEEVMVSVLRAPKTFTREDIIEINCHGGILTINRVLELTMTYGARMAEPGEFTKRAFLNGRIDLSQAEAVMDFIRSKTDRASKVAMNQIEGRLSDLIKKQRQSILEILAQVEVNIDYPEYDDVEDATTEFLLEQSKEIKQEINRLLDTGAQGKIMREGLSTVIVGKPNVGKSSMLNNLIQDNKAIVTEVAGTTRDVLEEYVNVRGVPLRLVDTAGIRETEDIVEKIGVERSRKALSQADLILFVLNNNEALTQEDYTLYEVVKNEDVIVIVNKMDLEQNIDINEVKDMIGDTPLIQTSMLKQEGIDELEIQIRDLFFGGEVQNQDMTYVSNSRHISLLKQARQTIQDAIDAAESGVPMDMVQIDLTRTWEILGEIIGETASDELIDQLFSQFCLGK</sequence>
<protein>
    <recommendedName>
        <fullName evidence="1">tRNA modification GTPase MnmE</fullName>
        <ecNumber evidence="1">3.6.-.-</ecNumber>
    </recommendedName>
</protein>